<gene>
    <name evidence="1" type="primary">fabA</name>
    <name type="ordered locus">BOV_2085</name>
</gene>
<reference key="1">
    <citation type="journal article" date="2009" name="PLoS ONE">
        <title>Genome degradation in Brucella ovis corresponds with narrowing of its host range and tissue tropism.</title>
        <authorList>
            <person name="Tsolis R.M."/>
            <person name="Seshadri R."/>
            <person name="Santos R.L."/>
            <person name="Sangari F.J."/>
            <person name="Lobo J.M."/>
            <person name="de Jong M.F."/>
            <person name="Ren Q."/>
            <person name="Myers G."/>
            <person name="Brinkac L.M."/>
            <person name="Nelson W.C."/>
            <person name="Deboy R.T."/>
            <person name="Angiuoli S."/>
            <person name="Khouri H."/>
            <person name="Dimitrov G."/>
            <person name="Robinson J.R."/>
            <person name="Mulligan S."/>
            <person name="Walker R.L."/>
            <person name="Elzer P.E."/>
            <person name="Hassan K.A."/>
            <person name="Paulsen I.T."/>
        </authorList>
    </citation>
    <scope>NUCLEOTIDE SEQUENCE [LARGE SCALE GENOMIC DNA]</scope>
    <source>
        <strain>ATCC 25840 / 63/290 / NCTC 10512</strain>
    </source>
</reference>
<dbReference type="EC" id="4.2.1.59" evidence="1"/>
<dbReference type="EC" id="5.3.3.14" evidence="1"/>
<dbReference type="EMBL" id="CP000708">
    <property type="protein sequence ID" value="ABQ61551.1"/>
    <property type="molecule type" value="Genomic_DNA"/>
</dbReference>
<dbReference type="RefSeq" id="WP_006014613.1">
    <property type="nucleotide sequence ID" value="NC_009505.1"/>
</dbReference>
<dbReference type="SMR" id="A5VTB9"/>
<dbReference type="GeneID" id="45125416"/>
<dbReference type="KEGG" id="bov:BOV_2085"/>
<dbReference type="HOGENOM" id="CLU_097925_0_0_5"/>
<dbReference type="UniPathway" id="UPA00094"/>
<dbReference type="Proteomes" id="UP000006383">
    <property type="component" value="Chromosome I"/>
</dbReference>
<dbReference type="GO" id="GO:0005737">
    <property type="term" value="C:cytoplasm"/>
    <property type="evidence" value="ECO:0007669"/>
    <property type="project" value="UniProtKB-SubCell"/>
</dbReference>
<dbReference type="GO" id="GO:0019171">
    <property type="term" value="F:(3R)-hydroxyacyl-[acyl-carrier-protein] dehydratase activity"/>
    <property type="evidence" value="ECO:0007669"/>
    <property type="project" value="UniProtKB-UniRule"/>
</dbReference>
<dbReference type="GO" id="GO:0034017">
    <property type="term" value="F:trans-2-decenoyl-acyl-carrier-protein isomerase activity"/>
    <property type="evidence" value="ECO:0007669"/>
    <property type="project" value="UniProtKB-UniRule"/>
</dbReference>
<dbReference type="GO" id="GO:0006636">
    <property type="term" value="P:unsaturated fatty acid biosynthetic process"/>
    <property type="evidence" value="ECO:0007669"/>
    <property type="project" value="UniProtKB-UniRule"/>
</dbReference>
<dbReference type="CDD" id="cd01287">
    <property type="entry name" value="FabA"/>
    <property type="match status" value="1"/>
</dbReference>
<dbReference type="Gene3D" id="3.10.129.10">
    <property type="entry name" value="Hotdog Thioesterase"/>
    <property type="match status" value="1"/>
</dbReference>
<dbReference type="HAMAP" id="MF_00405">
    <property type="entry name" value="FabA"/>
    <property type="match status" value="1"/>
</dbReference>
<dbReference type="InterPro" id="IPR010083">
    <property type="entry name" value="FabA"/>
</dbReference>
<dbReference type="InterPro" id="IPR013114">
    <property type="entry name" value="FabA_FabZ"/>
</dbReference>
<dbReference type="InterPro" id="IPR029069">
    <property type="entry name" value="HotDog_dom_sf"/>
</dbReference>
<dbReference type="NCBIfam" id="TIGR01749">
    <property type="entry name" value="fabA"/>
    <property type="match status" value="1"/>
</dbReference>
<dbReference type="NCBIfam" id="NF003509">
    <property type="entry name" value="PRK05174.1"/>
    <property type="match status" value="1"/>
</dbReference>
<dbReference type="PANTHER" id="PTHR30272">
    <property type="entry name" value="3-HYDROXYACYL-[ACYL-CARRIER-PROTEIN] DEHYDRATASE"/>
    <property type="match status" value="1"/>
</dbReference>
<dbReference type="PANTHER" id="PTHR30272:SF8">
    <property type="entry name" value="3-HYDROXYDECANOYL-[ACYL-CARRIER-PROTEIN] DEHYDRATASE"/>
    <property type="match status" value="1"/>
</dbReference>
<dbReference type="Pfam" id="PF07977">
    <property type="entry name" value="FabA"/>
    <property type="match status" value="1"/>
</dbReference>
<dbReference type="SUPFAM" id="SSF54637">
    <property type="entry name" value="Thioesterase/thiol ester dehydrase-isomerase"/>
    <property type="match status" value="1"/>
</dbReference>
<organism>
    <name type="scientific">Brucella ovis (strain ATCC 25840 / 63/290 / NCTC 10512)</name>
    <dbReference type="NCBI Taxonomy" id="444178"/>
    <lineage>
        <taxon>Bacteria</taxon>
        <taxon>Pseudomonadati</taxon>
        <taxon>Pseudomonadota</taxon>
        <taxon>Alphaproteobacteria</taxon>
        <taxon>Hyphomicrobiales</taxon>
        <taxon>Brucellaceae</taxon>
        <taxon>Brucella/Ochrobactrum group</taxon>
        <taxon>Brucella</taxon>
    </lineage>
</organism>
<feature type="chain" id="PRO_1000049822" description="3-hydroxydecanoyl-[acyl-carrier-protein] dehydratase">
    <location>
        <begin position="1"/>
        <end position="172"/>
    </location>
</feature>
<feature type="active site" evidence="1">
    <location>
        <position position="71"/>
    </location>
</feature>
<proteinExistence type="inferred from homology"/>
<evidence type="ECO:0000255" key="1">
    <source>
        <dbReference type="HAMAP-Rule" id="MF_00405"/>
    </source>
</evidence>
<accession>A5VTB9</accession>
<keyword id="KW-0963">Cytoplasm</keyword>
<keyword id="KW-0275">Fatty acid biosynthesis</keyword>
<keyword id="KW-0276">Fatty acid metabolism</keyword>
<keyword id="KW-0413">Isomerase</keyword>
<keyword id="KW-0444">Lipid biosynthesis</keyword>
<keyword id="KW-0443">Lipid metabolism</keyword>
<keyword id="KW-0456">Lyase</keyword>
<sequence>MAEQKSSYGYEELLACGRGEMFGPGNAQLPLPPMLMIHRITEISETGGAFDKGYIRAEYDVRPDDWYFPCHFQGNPIMPGCLGLDGMWQLTGFFLGWLGEPGRGMALSTGEVKFKGMVRPHTKLLEYGIDFKRVMRGRLVLGTADGCLKADGELIYQATDLRVGLSKEGSAQ</sequence>
<comment type="function">
    <text evidence="1">Necessary for the introduction of cis unsaturation into fatty acids. Catalyzes the dehydration of (3R)-3-hydroxydecanoyl-ACP to E-(2)-decenoyl-ACP and then its isomerization to Z-(3)-decenoyl-ACP. Can catalyze the dehydratase reaction for beta-hydroxyacyl-ACPs with saturated chain lengths up to 16:0, being most active on intermediate chain length.</text>
</comment>
<comment type="catalytic activity">
    <reaction evidence="1">
        <text>a (3R)-hydroxyacyl-[ACP] = a (2E)-enoyl-[ACP] + H2O</text>
        <dbReference type="Rhea" id="RHEA:13097"/>
        <dbReference type="Rhea" id="RHEA-COMP:9925"/>
        <dbReference type="Rhea" id="RHEA-COMP:9945"/>
        <dbReference type="ChEBI" id="CHEBI:15377"/>
        <dbReference type="ChEBI" id="CHEBI:78784"/>
        <dbReference type="ChEBI" id="CHEBI:78827"/>
        <dbReference type="EC" id="4.2.1.59"/>
    </reaction>
</comment>
<comment type="catalytic activity">
    <reaction evidence="1">
        <text>(3R)-hydroxydecanoyl-[ACP] = (2E)-decenoyl-[ACP] + H2O</text>
        <dbReference type="Rhea" id="RHEA:41860"/>
        <dbReference type="Rhea" id="RHEA-COMP:9638"/>
        <dbReference type="Rhea" id="RHEA-COMP:9639"/>
        <dbReference type="ChEBI" id="CHEBI:15377"/>
        <dbReference type="ChEBI" id="CHEBI:78466"/>
        <dbReference type="ChEBI" id="CHEBI:78467"/>
    </reaction>
</comment>
<comment type="catalytic activity">
    <reaction evidence="1">
        <text>(2E)-decenoyl-[ACP] = (3Z)-decenoyl-[ACP]</text>
        <dbReference type="Rhea" id="RHEA:23568"/>
        <dbReference type="Rhea" id="RHEA-COMP:9639"/>
        <dbReference type="Rhea" id="RHEA-COMP:9927"/>
        <dbReference type="ChEBI" id="CHEBI:78467"/>
        <dbReference type="ChEBI" id="CHEBI:78798"/>
        <dbReference type="EC" id="5.3.3.14"/>
    </reaction>
</comment>
<comment type="pathway">
    <text evidence="1">Lipid metabolism; fatty acid biosynthesis.</text>
</comment>
<comment type="subunit">
    <text evidence="1">Homodimer.</text>
</comment>
<comment type="subcellular location">
    <subcellularLocation>
        <location evidence="1">Cytoplasm</location>
    </subcellularLocation>
</comment>
<comment type="similarity">
    <text evidence="1">Belongs to the thioester dehydratase family. FabA subfamily.</text>
</comment>
<protein>
    <recommendedName>
        <fullName evidence="1">3-hydroxydecanoyl-[acyl-carrier-protein] dehydratase</fullName>
        <ecNumber evidence="1">4.2.1.59</ecNumber>
    </recommendedName>
    <alternativeName>
        <fullName evidence="1">3-hydroxyacyl-[acyl-carrier-protein] dehydratase FabA</fullName>
    </alternativeName>
    <alternativeName>
        <fullName evidence="1">Beta-hydroxydecanoyl thioester dehydrase</fullName>
    </alternativeName>
    <alternativeName>
        <fullName evidence="1">Trans-2-decenoyl-[acyl-carrier-protein] isomerase</fullName>
        <ecNumber evidence="1">5.3.3.14</ecNumber>
    </alternativeName>
</protein>
<name>FABA_BRUO2</name>